<sequence length="472" mass="50688">MSGTSSMGLPPGPRLSGSVQAVLMLRHGLRFLTACQRRYGSVFTLHVAGFGHMVYLSDPAAIKTVFAGNPSVFHAGEANSMLAGLLGDSSLLLIDDDVHRDRRRLMSPPFHRDAVARQAGPIAEIAAANIAGWPMAKAFAVAPKMSEITLEVILRTVIGASDPVRLAALRKVMPRLLNVGPWATLALANPSLLNNRLWSRLRRRIEEADALLYAEIADRRADPDLAARTDTLAMLVRAADEDGRTMTERELRDQLITLLVAGHDTTATGLSWALERLTRHPVTLAKAVQAADASAAGDPAGDEYLDAVAKETLRIRPVVYDVGRVLTEAVEVAGYRLPAGVMVVPAIGLVHASAQLYPDPERFDPDRMVGATLSPTTWLPFGGGNRRCLGATFAMVEMRVVLREILRRVELSTTTTSGERPKLKHVIMVPHRGARIRVRATRDVSATSQATAQGAGCPAARGGGPSRAVGSQ</sequence>
<feature type="chain" id="PRO_0000426924" description="Putative cytochrome P450 135B1">
    <location>
        <begin position="1"/>
        <end position="472"/>
    </location>
</feature>
<feature type="region of interest" description="Disordered" evidence="2">
    <location>
        <begin position="442"/>
        <end position="472"/>
    </location>
</feature>
<feature type="compositionally biased region" description="Low complexity" evidence="2">
    <location>
        <begin position="452"/>
        <end position="472"/>
    </location>
</feature>
<feature type="binding site" description="axial binding residue" evidence="1">
    <location>
        <position position="388"/>
    </location>
    <ligand>
        <name>heme</name>
        <dbReference type="ChEBI" id="CHEBI:30413"/>
    </ligand>
    <ligandPart>
        <name>Fe</name>
        <dbReference type="ChEBI" id="CHEBI:18248"/>
    </ligandPart>
</feature>
<accession>P9WPM8</accession>
<accession>L0T464</accession>
<accession>O53765</accession>
<accession>P63715</accession>
<keyword id="KW-0349">Heme</keyword>
<keyword id="KW-0408">Iron</keyword>
<keyword id="KW-0479">Metal-binding</keyword>
<keyword id="KW-0503">Monooxygenase</keyword>
<keyword id="KW-0560">Oxidoreductase</keyword>
<keyword id="KW-1185">Reference proteome</keyword>
<evidence type="ECO:0000250" key="1"/>
<evidence type="ECO:0000256" key="2">
    <source>
        <dbReference type="SAM" id="MobiDB-lite"/>
    </source>
</evidence>
<evidence type="ECO:0000305" key="3"/>
<reference key="1">
    <citation type="journal article" date="2002" name="J. Bacteriol.">
        <title>Whole-genome comparison of Mycobacterium tuberculosis clinical and laboratory strains.</title>
        <authorList>
            <person name="Fleischmann R.D."/>
            <person name="Alland D."/>
            <person name="Eisen J.A."/>
            <person name="Carpenter L."/>
            <person name="White O."/>
            <person name="Peterson J.D."/>
            <person name="DeBoy R.T."/>
            <person name="Dodson R.J."/>
            <person name="Gwinn M.L."/>
            <person name="Haft D.H."/>
            <person name="Hickey E.K."/>
            <person name="Kolonay J.F."/>
            <person name="Nelson W.C."/>
            <person name="Umayam L.A."/>
            <person name="Ermolaeva M.D."/>
            <person name="Salzberg S.L."/>
            <person name="Delcher A."/>
            <person name="Utterback T.R."/>
            <person name="Weidman J.F."/>
            <person name="Khouri H.M."/>
            <person name="Gill J."/>
            <person name="Mikula A."/>
            <person name="Bishai W."/>
            <person name="Jacobs W.R. Jr."/>
            <person name="Venter J.C."/>
            <person name="Fraser C.M."/>
        </authorList>
    </citation>
    <scope>NUCLEOTIDE SEQUENCE [LARGE SCALE GENOMIC DNA]</scope>
    <source>
        <strain>CDC 1551 / Oshkosh</strain>
    </source>
</reference>
<dbReference type="EC" id="1.14.-.-"/>
<dbReference type="EMBL" id="AE000516">
    <property type="protein sequence ID" value="AAK44817.1"/>
    <property type="molecule type" value="Genomic_DNA"/>
</dbReference>
<dbReference type="PIR" id="G70932">
    <property type="entry name" value="G70932"/>
</dbReference>
<dbReference type="RefSeq" id="WP_003402992.1">
    <property type="nucleotide sequence ID" value="NZ_KK341227.1"/>
</dbReference>
<dbReference type="SMR" id="P9WPM8"/>
<dbReference type="KEGG" id="mtc:MT0594"/>
<dbReference type="PATRIC" id="fig|83331.31.peg.626"/>
<dbReference type="HOGENOM" id="CLU_001570_5_1_11"/>
<dbReference type="Proteomes" id="UP000001020">
    <property type="component" value="Chromosome"/>
</dbReference>
<dbReference type="GO" id="GO:0020037">
    <property type="term" value="F:heme binding"/>
    <property type="evidence" value="ECO:0007669"/>
    <property type="project" value="InterPro"/>
</dbReference>
<dbReference type="GO" id="GO:0005506">
    <property type="term" value="F:iron ion binding"/>
    <property type="evidence" value="ECO:0007669"/>
    <property type="project" value="InterPro"/>
</dbReference>
<dbReference type="GO" id="GO:0004497">
    <property type="term" value="F:monooxygenase activity"/>
    <property type="evidence" value="ECO:0007669"/>
    <property type="project" value="UniProtKB-KW"/>
</dbReference>
<dbReference type="GO" id="GO:0016705">
    <property type="term" value="F:oxidoreductase activity, acting on paired donors, with incorporation or reduction of molecular oxygen"/>
    <property type="evidence" value="ECO:0007669"/>
    <property type="project" value="InterPro"/>
</dbReference>
<dbReference type="CDD" id="cd11053">
    <property type="entry name" value="CYP110-like"/>
    <property type="match status" value="1"/>
</dbReference>
<dbReference type="Gene3D" id="1.10.630.10">
    <property type="entry name" value="Cytochrome P450"/>
    <property type="match status" value="1"/>
</dbReference>
<dbReference type="InterPro" id="IPR001128">
    <property type="entry name" value="Cyt_P450"/>
</dbReference>
<dbReference type="InterPro" id="IPR017972">
    <property type="entry name" value="Cyt_P450_CS"/>
</dbReference>
<dbReference type="InterPro" id="IPR002401">
    <property type="entry name" value="Cyt_P450_E_grp-I"/>
</dbReference>
<dbReference type="InterPro" id="IPR036396">
    <property type="entry name" value="Cyt_P450_sf"/>
</dbReference>
<dbReference type="InterPro" id="IPR050121">
    <property type="entry name" value="Cytochrome_P450_monoxygenase"/>
</dbReference>
<dbReference type="PANTHER" id="PTHR24305">
    <property type="entry name" value="CYTOCHROME P450"/>
    <property type="match status" value="1"/>
</dbReference>
<dbReference type="PANTHER" id="PTHR24305:SF166">
    <property type="entry name" value="CYTOCHROME P450 12A4, MITOCHONDRIAL-RELATED"/>
    <property type="match status" value="1"/>
</dbReference>
<dbReference type="Pfam" id="PF00067">
    <property type="entry name" value="p450"/>
    <property type="match status" value="1"/>
</dbReference>
<dbReference type="PRINTS" id="PR00463">
    <property type="entry name" value="EP450I"/>
</dbReference>
<dbReference type="PRINTS" id="PR00385">
    <property type="entry name" value="P450"/>
</dbReference>
<dbReference type="SUPFAM" id="SSF48264">
    <property type="entry name" value="Cytochrome P450"/>
    <property type="match status" value="1"/>
</dbReference>
<dbReference type="PROSITE" id="PS00086">
    <property type="entry name" value="CYTOCHROME_P450"/>
    <property type="match status" value="1"/>
</dbReference>
<proteinExistence type="inferred from homology"/>
<protein>
    <recommendedName>
        <fullName>Putative cytochrome P450 135B1</fullName>
        <ecNumber>1.14.-.-</ecNumber>
    </recommendedName>
</protein>
<organism>
    <name type="scientific">Mycobacterium tuberculosis (strain CDC 1551 / Oshkosh)</name>
    <dbReference type="NCBI Taxonomy" id="83331"/>
    <lineage>
        <taxon>Bacteria</taxon>
        <taxon>Bacillati</taxon>
        <taxon>Actinomycetota</taxon>
        <taxon>Actinomycetes</taxon>
        <taxon>Mycobacteriales</taxon>
        <taxon>Mycobacteriaceae</taxon>
        <taxon>Mycobacterium</taxon>
        <taxon>Mycobacterium tuberculosis complex</taxon>
    </lineage>
</organism>
<gene>
    <name type="primary">cyp135B1</name>
    <name type="ordered locus">MT0594</name>
</gene>
<name>C135B_MYCTO</name>
<comment type="cofactor">
    <cofactor evidence="1">
        <name>heme</name>
        <dbReference type="ChEBI" id="CHEBI:30413"/>
    </cofactor>
</comment>
<comment type="similarity">
    <text evidence="3">Belongs to the cytochrome P450 family.</text>
</comment>